<accession>C0PZ59</accession>
<name>GLMM_SALPC</name>
<evidence type="ECO:0000255" key="1">
    <source>
        <dbReference type="HAMAP-Rule" id="MF_01554"/>
    </source>
</evidence>
<feature type="chain" id="PRO_1000185381" description="Phosphoglucosamine mutase">
    <location>
        <begin position="1"/>
        <end position="445"/>
    </location>
</feature>
<feature type="active site" description="Phosphoserine intermediate" evidence="1">
    <location>
        <position position="102"/>
    </location>
</feature>
<feature type="binding site" description="via phosphate group" evidence="1">
    <location>
        <position position="102"/>
    </location>
    <ligand>
        <name>Mg(2+)</name>
        <dbReference type="ChEBI" id="CHEBI:18420"/>
    </ligand>
</feature>
<feature type="binding site" evidence="1">
    <location>
        <position position="241"/>
    </location>
    <ligand>
        <name>Mg(2+)</name>
        <dbReference type="ChEBI" id="CHEBI:18420"/>
    </ligand>
</feature>
<feature type="binding site" evidence="1">
    <location>
        <position position="243"/>
    </location>
    <ligand>
        <name>Mg(2+)</name>
        <dbReference type="ChEBI" id="CHEBI:18420"/>
    </ligand>
</feature>
<feature type="binding site" evidence="1">
    <location>
        <position position="245"/>
    </location>
    <ligand>
        <name>Mg(2+)</name>
        <dbReference type="ChEBI" id="CHEBI:18420"/>
    </ligand>
</feature>
<feature type="modified residue" description="Phosphoserine" evidence="1">
    <location>
        <position position="102"/>
    </location>
</feature>
<dbReference type="EC" id="5.4.2.10" evidence="1"/>
<dbReference type="EMBL" id="CP000857">
    <property type="protein sequence ID" value="ACN47447.1"/>
    <property type="molecule type" value="Genomic_DNA"/>
</dbReference>
<dbReference type="RefSeq" id="WP_000071172.1">
    <property type="nucleotide sequence ID" value="NC_012125.1"/>
</dbReference>
<dbReference type="SMR" id="C0PZ59"/>
<dbReference type="KEGG" id="sei:SPC_3362"/>
<dbReference type="HOGENOM" id="CLU_016950_7_0_6"/>
<dbReference type="Proteomes" id="UP000001599">
    <property type="component" value="Chromosome"/>
</dbReference>
<dbReference type="GO" id="GO:0005829">
    <property type="term" value="C:cytosol"/>
    <property type="evidence" value="ECO:0007669"/>
    <property type="project" value="TreeGrafter"/>
</dbReference>
<dbReference type="GO" id="GO:0000287">
    <property type="term" value="F:magnesium ion binding"/>
    <property type="evidence" value="ECO:0007669"/>
    <property type="project" value="UniProtKB-UniRule"/>
</dbReference>
<dbReference type="GO" id="GO:0008966">
    <property type="term" value="F:phosphoglucosamine mutase activity"/>
    <property type="evidence" value="ECO:0007669"/>
    <property type="project" value="UniProtKB-UniRule"/>
</dbReference>
<dbReference type="GO" id="GO:0004615">
    <property type="term" value="F:phosphomannomutase activity"/>
    <property type="evidence" value="ECO:0007669"/>
    <property type="project" value="TreeGrafter"/>
</dbReference>
<dbReference type="GO" id="GO:0005975">
    <property type="term" value="P:carbohydrate metabolic process"/>
    <property type="evidence" value="ECO:0007669"/>
    <property type="project" value="InterPro"/>
</dbReference>
<dbReference type="GO" id="GO:0009252">
    <property type="term" value="P:peptidoglycan biosynthetic process"/>
    <property type="evidence" value="ECO:0007669"/>
    <property type="project" value="TreeGrafter"/>
</dbReference>
<dbReference type="GO" id="GO:0006048">
    <property type="term" value="P:UDP-N-acetylglucosamine biosynthetic process"/>
    <property type="evidence" value="ECO:0007669"/>
    <property type="project" value="TreeGrafter"/>
</dbReference>
<dbReference type="CDD" id="cd05802">
    <property type="entry name" value="GlmM"/>
    <property type="match status" value="1"/>
</dbReference>
<dbReference type="FunFam" id="3.30.310.50:FF:000001">
    <property type="entry name" value="Phosphoglucosamine mutase"/>
    <property type="match status" value="1"/>
</dbReference>
<dbReference type="FunFam" id="3.40.120.10:FF:000001">
    <property type="entry name" value="Phosphoglucosamine mutase"/>
    <property type="match status" value="1"/>
</dbReference>
<dbReference type="FunFam" id="3.40.120.10:FF:000002">
    <property type="entry name" value="Phosphoglucosamine mutase"/>
    <property type="match status" value="1"/>
</dbReference>
<dbReference type="Gene3D" id="3.40.120.10">
    <property type="entry name" value="Alpha-D-Glucose-1,6-Bisphosphate, subunit A, domain 3"/>
    <property type="match status" value="3"/>
</dbReference>
<dbReference type="Gene3D" id="3.30.310.50">
    <property type="entry name" value="Alpha-D-phosphohexomutase, C-terminal domain"/>
    <property type="match status" value="1"/>
</dbReference>
<dbReference type="HAMAP" id="MF_01554_B">
    <property type="entry name" value="GlmM_B"/>
    <property type="match status" value="1"/>
</dbReference>
<dbReference type="InterPro" id="IPR005844">
    <property type="entry name" value="A-D-PHexomutase_a/b/a-I"/>
</dbReference>
<dbReference type="InterPro" id="IPR016055">
    <property type="entry name" value="A-D-PHexomutase_a/b/a-I/II/III"/>
</dbReference>
<dbReference type="InterPro" id="IPR005845">
    <property type="entry name" value="A-D-PHexomutase_a/b/a-II"/>
</dbReference>
<dbReference type="InterPro" id="IPR005846">
    <property type="entry name" value="A-D-PHexomutase_a/b/a-III"/>
</dbReference>
<dbReference type="InterPro" id="IPR005843">
    <property type="entry name" value="A-D-PHexomutase_C"/>
</dbReference>
<dbReference type="InterPro" id="IPR036900">
    <property type="entry name" value="A-D-PHexomutase_C_sf"/>
</dbReference>
<dbReference type="InterPro" id="IPR016066">
    <property type="entry name" value="A-D-PHexomutase_CS"/>
</dbReference>
<dbReference type="InterPro" id="IPR005841">
    <property type="entry name" value="Alpha-D-phosphohexomutase_SF"/>
</dbReference>
<dbReference type="InterPro" id="IPR006352">
    <property type="entry name" value="GlmM_bact"/>
</dbReference>
<dbReference type="InterPro" id="IPR050060">
    <property type="entry name" value="Phosphoglucosamine_mutase"/>
</dbReference>
<dbReference type="NCBIfam" id="TIGR01455">
    <property type="entry name" value="glmM"/>
    <property type="match status" value="1"/>
</dbReference>
<dbReference type="NCBIfam" id="NF008139">
    <property type="entry name" value="PRK10887.1"/>
    <property type="match status" value="1"/>
</dbReference>
<dbReference type="PANTHER" id="PTHR42946:SF1">
    <property type="entry name" value="PHOSPHOGLUCOMUTASE (ALPHA-D-GLUCOSE-1,6-BISPHOSPHATE-DEPENDENT)"/>
    <property type="match status" value="1"/>
</dbReference>
<dbReference type="PANTHER" id="PTHR42946">
    <property type="entry name" value="PHOSPHOHEXOSE MUTASE"/>
    <property type="match status" value="1"/>
</dbReference>
<dbReference type="Pfam" id="PF02878">
    <property type="entry name" value="PGM_PMM_I"/>
    <property type="match status" value="1"/>
</dbReference>
<dbReference type="Pfam" id="PF02879">
    <property type="entry name" value="PGM_PMM_II"/>
    <property type="match status" value="1"/>
</dbReference>
<dbReference type="Pfam" id="PF02880">
    <property type="entry name" value="PGM_PMM_III"/>
    <property type="match status" value="1"/>
</dbReference>
<dbReference type="Pfam" id="PF00408">
    <property type="entry name" value="PGM_PMM_IV"/>
    <property type="match status" value="1"/>
</dbReference>
<dbReference type="PRINTS" id="PR00509">
    <property type="entry name" value="PGMPMM"/>
</dbReference>
<dbReference type="SUPFAM" id="SSF55957">
    <property type="entry name" value="Phosphoglucomutase, C-terminal domain"/>
    <property type="match status" value="1"/>
</dbReference>
<dbReference type="SUPFAM" id="SSF53738">
    <property type="entry name" value="Phosphoglucomutase, first 3 domains"/>
    <property type="match status" value="3"/>
</dbReference>
<dbReference type="PROSITE" id="PS00710">
    <property type="entry name" value="PGM_PMM"/>
    <property type="match status" value="1"/>
</dbReference>
<proteinExistence type="inferred from homology"/>
<comment type="function">
    <text evidence="1">Catalyzes the conversion of glucosamine-6-phosphate to glucosamine-1-phosphate.</text>
</comment>
<comment type="catalytic activity">
    <reaction evidence="1">
        <text>alpha-D-glucosamine 1-phosphate = D-glucosamine 6-phosphate</text>
        <dbReference type="Rhea" id="RHEA:23424"/>
        <dbReference type="ChEBI" id="CHEBI:58516"/>
        <dbReference type="ChEBI" id="CHEBI:58725"/>
        <dbReference type="EC" id="5.4.2.10"/>
    </reaction>
</comment>
<comment type="cofactor">
    <cofactor evidence="1">
        <name>Mg(2+)</name>
        <dbReference type="ChEBI" id="CHEBI:18420"/>
    </cofactor>
    <text evidence="1">Binds 1 Mg(2+) ion per subunit.</text>
</comment>
<comment type="PTM">
    <text evidence="1">Activated by phosphorylation.</text>
</comment>
<comment type="similarity">
    <text evidence="1">Belongs to the phosphohexose mutase family.</text>
</comment>
<gene>
    <name evidence="1" type="primary">glmM</name>
    <name type="ordered locus">SPC_3362</name>
</gene>
<sequence>MSNRKYFGTDGIRGRVGNAPITPDFVLKLGWAAGKVLARHGSRKIIIGKDTRISGYMLESALEAGLAAAGLSASFTGPMPTPAVAYLTRTFRAEAGIVISASHNPFYDNGIKFFSIDGTKLPDDVEEAIEAEMEKEITCVDSAELGKASRIVDAAGRYIEFCKGTFPNELSLNGLKVVVDCANGATYHIAPNVLRELGATVIAIGCEPNGVNINEEVGATDVRALQARVLAEKADLGIALDGDGDRVIMVDHEGNKVDGDQIMYIIAREGLRQGQLRGGAVGTLMSNMGLELALKQLGIPFSRAKVGDRYVLEKLQEKGWRIGAENSGHVILLDKTTTGDGIVAGLQVLAAMVRNHMSLHDLCSGMKMFPQILVNVRYTAGSGDPLENEAVKAVTADVEATLGNRGRVLLRKSGTEPLIRVMVEGEDEAQVTAFAHRIADAVKAV</sequence>
<reference key="1">
    <citation type="journal article" date="2009" name="PLoS ONE">
        <title>Salmonella paratyphi C: genetic divergence from Salmonella choleraesuis and pathogenic convergence with Salmonella typhi.</title>
        <authorList>
            <person name="Liu W.-Q."/>
            <person name="Feng Y."/>
            <person name="Wang Y."/>
            <person name="Zou Q.-H."/>
            <person name="Chen F."/>
            <person name="Guo J.-T."/>
            <person name="Peng Y.-H."/>
            <person name="Jin Y."/>
            <person name="Li Y.-G."/>
            <person name="Hu S.-N."/>
            <person name="Johnston R.N."/>
            <person name="Liu G.-R."/>
            <person name="Liu S.-L."/>
        </authorList>
    </citation>
    <scope>NUCLEOTIDE SEQUENCE [LARGE SCALE GENOMIC DNA]</scope>
    <source>
        <strain>RKS4594</strain>
    </source>
</reference>
<organism>
    <name type="scientific">Salmonella paratyphi C (strain RKS4594)</name>
    <dbReference type="NCBI Taxonomy" id="476213"/>
    <lineage>
        <taxon>Bacteria</taxon>
        <taxon>Pseudomonadati</taxon>
        <taxon>Pseudomonadota</taxon>
        <taxon>Gammaproteobacteria</taxon>
        <taxon>Enterobacterales</taxon>
        <taxon>Enterobacteriaceae</taxon>
        <taxon>Salmonella</taxon>
    </lineage>
</organism>
<protein>
    <recommendedName>
        <fullName evidence="1">Phosphoglucosamine mutase</fullName>
        <ecNumber evidence="1">5.4.2.10</ecNumber>
    </recommendedName>
</protein>
<keyword id="KW-0413">Isomerase</keyword>
<keyword id="KW-0460">Magnesium</keyword>
<keyword id="KW-0479">Metal-binding</keyword>
<keyword id="KW-0597">Phosphoprotein</keyword>